<evidence type="ECO:0000255" key="1">
    <source>
        <dbReference type="HAMAP-Rule" id="MF_00281"/>
    </source>
</evidence>
<keyword id="KW-0030">Aminoacyl-tRNA synthetase</keyword>
<keyword id="KW-0067">ATP-binding</keyword>
<keyword id="KW-0963">Cytoplasm</keyword>
<keyword id="KW-0436">Ligase</keyword>
<keyword id="KW-0460">Magnesium</keyword>
<keyword id="KW-0479">Metal-binding</keyword>
<keyword id="KW-0547">Nucleotide-binding</keyword>
<keyword id="KW-0648">Protein biosynthesis</keyword>
<organism>
    <name type="scientific">Dehalococcoides mccartyi (strain CBDB1)</name>
    <dbReference type="NCBI Taxonomy" id="255470"/>
    <lineage>
        <taxon>Bacteria</taxon>
        <taxon>Bacillati</taxon>
        <taxon>Chloroflexota</taxon>
        <taxon>Dehalococcoidia</taxon>
        <taxon>Dehalococcoidales</taxon>
        <taxon>Dehalococcoidaceae</taxon>
        <taxon>Dehalococcoides</taxon>
    </lineage>
</organism>
<dbReference type="EC" id="6.1.1.20" evidence="1"/>
<dbReference type="EMBL" id="AJ965256">
    <property type="protein sequence ID" value="CAI82533.1"/>
    <property type="molecule type" value="Genomic_DNA"/>
</dbReference>
<dbReference type="RefSeq" id="WP_011308890.1">
    <property type="nucleotide sequence ID" value="NC_007356.1"/>
</dbReference>
<dbReference type="SMR" id="Q3ZZD3"/>
<dbReference type="KEGG" id="deh:cbdbA307"/>
<dbReference type="HOGENOM" id="CLU_025086_0_1_0"/>
<dbReference type="Proteomes" id="UP000000433">
    <property type="component" value="Chromosome"/>
</dbReference>
<dbReference type="GO" id="GO:0005737">
    <property type="term" value="C:cytoplasm"/>
    <property type="evidence" value="ECO:0007669"/>
    <property type="project" value="UniProtKB-SubCell"/>
</dbReference>
<dbReference type="GO" id="GO:0005524">
    <property type="term" value="F:ATP binding"/>
    <property type="evidence" value="ECO:0007669"/>
    <property type="project" value="UniProtKB-UniRule"/>
</dbReference>
<dbReference type="GO" id="GO:0000287">
    <property type="term" value="F:magnesium ion binding"/>
    <property type="evidence" value="ECO:0007669"/>
    <property type="project" value="UniProtKB-UniRule"/>
</dbReference>
<dbReference type="GO" id="GO:0004826">
    <property type="term" value="F:phenylalanine-tRNA ligase activity"/>
    <property type="evidence" value="ECO:0007669"/>
    <property type="project" value="UniProtKB-UniRule"/>
</dbReference>
<dbReference type="GO" id="GO:0000049">
    <property type="term" value="F:tRNA binding"/>
    <property type="evidence" value="ECO:0007669"/>
    <property type="project" value="InterPro"/>
</dbReference>
<dbReference type="GO" id="GO:0006432">
    <property type="term" value="P:phenylalanyl-tRNA aminoacylation"/>
    <property type="evidence" value="ECO:0007669"/>
    <property type="project" value="UniProtKB-UniRule"/>
</dbReference>
<dbReference type="CDD" id="cd00496">
    <property type="entry name" value="PheRS_alpha_core"/>
    <property type="match status" value="1"/>
</dbReference>
<dbReference type="FunFam" id="3.30.930.10:FF:000003">
    <property type="entry name" value="Phenylalanine--tRNA ligase alpha subunit"/>
    <property type="match status" value="1"/>
</dbReference>
<dbReference type="Gene3D" id="3.30.930.10">
    <property type="entry name" value="Bira Bifunctional Protein, Domain 2"/>
    <property type="match status" value="1"/>
</dbReference>
<dbReference type="HAMAP" id="MF_00281">
    <property type="entry name" value="Phe_tRNA_synth_alpha1"/>
    <property type="match status" value="1"/>
</dbReference>
<dbReference type="InterPro" id="IPR006195">
    <property type="entry name" value="aa-tRNA-synth_II"/>
</dbReference>
<dbReference type="InterPro" id="IPR045864">
    <property type="entry name" value="aa-tRNA-synth_II/BPL/LPL"/>
</dbReference>
<dbReference type="InterPro" id="IPR004529">
    <property type="entry name" value="Phe-tRNA-synth_IIc_asu"/>
</dbReference>
<dbReference type="InterPro" id="IPR004188">
    <property type="entry name" value="Phe-tRNA_ligase_II_N"/>
</dbReference>
<dbReference type="InterPro" id="IPR022911">
    <property type="entry name" value="Phe_tRNA_ligase_alpha1_bac"/>
</dbReference>
<dbReference type="InterPro" id="IPR002319">
    <property type="entry name" value="Phenylalanyl-tRNA_Synthase"/>
</dbReference>
<dbReference type="InterPro" id="IPR010978">
    <property type="entry name" value="tRNA-bd_arm"/>
</dbReference>
<dbReference type="NCBIfam" id="TIGR00468">
    <property type="entry name" value="pheS"/>
    <property type="match status" value="1"/>
</dbReference>
<dbReference type="PANTHER" id="PTHR11538:SF41">
    <property type="entry name" value="PHENYLALANINE--TRNA LIGASE, MITOCHONDRIAL"/>
    <property type="match status" value="1"/>
</dbReference>
<dbReference type="PANTHER" id="PTHR11538">
    <property type="entry name" value="PHENYLALANYL-TRNA SYNTHETASE"/>
    <property type="match status" value="1"/>
</dbReference>
<dbReference type="Pfam" id="PF02912">
    <property type="entry name" value="Phe_tRNA-synt_N"/>
    <property type="match status" value="1"/>
</dbReference>
<dbReference type="Pfam" id="PF01409">
    <property type="entry name" value="tRNA-synt_2d"/>
    <property type="match status" value="1"/>
</dbReference>
<dbReference type="SUPFAM" id="SSF55681">
    <property type="entry name" value="Class II aaRS and biotin synthetases"/>
    <property type="match status" value="1"/>
</dbReference>
<dbReference type="SUPFAM" id="SSF46589">
    <property type="entry name" value="tRNA-binding arm"/>
    <property type="match status" value="1"/>
</dbReference>
<dbReference type="PROSITE" id="PS50862">
    <property type="entry name" value="AA_TRNA_LIGASE_II"/>
    <property type="match status" value="1"/>
</dbReference>
<reference key="1">
    <citation type="journal article" date="2005" name="Nat. Biotechnol.">
        <title>Genome sequence of the chlorinated compound-respiring bacterium Dehalococcoides species strain CBDB1.</title>
        <authorList>
            <person name="Kube M."/>
            <person name="Beck A."/>
            <person name="Zinder S.H."/>
            <person name="Kuhl H."/>
            <person name="Reinhardt R."/>
            <person name="Adrian L."/>
        </authorList>
    </citation>
    <scope>NUCLEOTIDE SEQUENCE [LARGE SCALE GENOMIC DNA]</scope>
    <source>
        <strain>CBDB1</strain>
    </source>
</reference>
<sequence>MEEIKNITDITQSALAELEAITDLKDLEAWRVRYLGKKSLLTGALRNLASLPIEERKAAGAAANEAKAALEAAFLQKEQISKEKQFASRNEGLDITLPGRPWPIGRIHPLTQVTNEVTTIFSSLGFSVVEGPEIEDDYHNFEALNIPEDHPARENMQTFWIDRPNDNGRLDTLLRTHTSPMQVRYMEKNKPPIRIVVPGKVYRYEATDATHIPMFTQVEGLVVDRGISMAHLKGTLMEFCRRFFGANRKVRFRCDYFPFVEPGVEVAVSCTCGGKKECSVCHGSGWLEILGAGMVHPKVLERVGIDSEQYTGFAFGMGLERLPMLRYGIDDIRLFYSNDTRFLRQF</sequence>
<feature type="chain" id="PRO_0000231979" description="Phenylalanine--tRNA ligase alpha subunit">
    <location>
        <begin position="1"/>
        <end position="346"/>
    </location>
</feature>
<feature type="binding site" evidence="1">
    <location>
        <position position="261"/>
    </location>
    <ligand>
        <name>Mg(2+)</name>
        <dbReference type="ChEBI" id="CHEBI:18420"/>
        <note>shared with beta subunit</note>
    </ligand>
</feature>
<protein>
    <recommendedName>
        <fullName evidence="1">Phenylalanine--tRNA ligase alpha subunit</fullName>
        <ecNumber evidence="1">6.1.1.20</ecNumber>
    </recommendedName>
    <alternativeName>
        <fullName evidence="1">Phenylalanyl-tRNA synthetase alpha subunit</fullName>
        <shortName evidence="1">PheRS</shortName>
    </alternativeName>
</protein>
<name>SYFA_DEHMC</name>
<comment type="catalytic activity">
    <reaction evidence="1">
        <text>tRNA(Phe) + L-phenylalanine + ATP = L-phenylalanyl-tRNA(Phe) + AMP + diphosphate + H(+)</text>
        <dbReference type="Rhea" id="RHEA:19413"/>
        <dbReference type="Rhea" id="RHEA-COMP:9668"/>
        <dbReference type="Rhea" id="RHEA-COMP:9699"/>
        <dbReference type="ChEBI" id="CHEBI:15378"/>
        <dbReference type="ChEBI" id="CHEBI:30616"/>
        <dbReference type="ChEBI" id="CHEBI:33019"/>
        <dbReference type="ChEBI" id="CHEBI:58095"/>
        <dbReference type="ChEBI" id="CHEBI:78442"/>
        <dbReference type="ChEBI" id="CHEBI:78531"/>
        <dbReference type="ChEBI" id="CHEBI:456215"/>
        <dbReference type="EC" id="6.1.1.20"/>
    </reaction>
</comment>
<comment type="cofactor">
    <cofactor evidence="1">
        <name>Mg(2+)</name>
        <dbReference type="ChEBI" id="CHEBI:18420"/>
    </cofactor>
    <text evidence="1">Binds 2 magnesium ions per tetramer.</text>
</comment>
<comment type="subunit">
    <text evidence="1">Tetramer of two alpha and two beta subunits.</text>
</comment>
<comment type="subcellular location">
    <subcellularLocation>
        <location evidence="1">Cytoplasm</location>
    </subcellularLocation>
</comment>
<comment type="similarity">
    <text evidence="1">Belongs to the class-II aminoacyl-tRNA synthetase family. Phe-tRNA synthetase alpha subunit type 1 subfamily.</text>
</comment>
<gene>
    <name evidence="1" type="primary">pheS</name>
    <name type="ordered locus">cbdbA307</name>
</gene>
<proteinExistence type="inferred from homology"/>
<accession>Q3ZZD3</accession>